<comment type="function">
    <text evidence="1">Produces ATP from ADP in the presence of a proton gradient across the membrane. The catalytic sites are hosted primarily by the beta subunits.</text>
</comment>
<comment type="catalytic activity">
    <reaction evidence="1">
        <text>ATP + H2O + 4 H(+)(in) = ADP + phosphate + 5 H(+)(out)</text>
        <dbReference type="Rhea" id="RHEA:57720"/>
        <dbReference type="ChEBI" id="CHEBI:15377"/>
        <dbReference type="ChEBI" id="CHEBI:15378"/>
        <dbReference type="ChEBI" id="CHEBI:30616"/>
        <dbReference type="ChEBI" id="CHEBI:43474"/>
        <dbReference type="ChEBI" id="CHEBI:456216"/>
        <dbReference type="EC" id="7.1.2.2"/>
    </reaction>
</comment>
<comment type="subunit">
    <text evidence="1">F-type ATPases have 2 components, CF(1) - the catalytic core - and CF(0) - the membrane proton channel. CF(1) has five subunits: alpha(3), beta(3), gamma(1), delta(1), epsilon(1). CF(0) has three main subunits: a(1), b(2) and c(9-12). The alpha and beta chains form an alternating ring which encloses part of the gamma chain. CF(1) is attached to CF(0) by a central stalk formed by the gamma and epsilon chains, while a peripheral stalk is formed by the delta and b chains.</text>
</comment>
<comment type="subcellular location">
    <subcellularLocation>
        <location evidence="1">Cell membrane</location>
        <topology evidence="1">Peripheral membrane protein</topology>
    </subcellularLocation>
</comment>
<comment type="similarity">
    <text evidence="1">Belongs to the ATPase alpha/beta chains family.</text>
</comment>
<proteinExistence type="inferred from homology"/>
<name>ATPB_GEOTH</name>
<reference key="1">
    <citation type="submission" date="1999-05" db="EMBL/GenBank/DDBJ databases">
        <title>Metal-induced proteins in Bacillus thermoleovorans.</title>
        <authorList>
            <person name="Llanos J."/>
            <person name="Geslin C."/>
            <person name="Prieur D."/>
            <person name="Jeanthon C."/>
        </authorList>
    </citation>
    <scope>NUCLEOTIDE SEQUENCE [GENOMIC DNA]</scope>
    <source>
        <strain>SG1</strain>
    </source>
</reference>
<keyword id="KW-0066">ATP synthesis</keyword>
<keyword id="KW-0067">ATP-binding</keyword>
<keyword id="KW-1003">Cell membrane</keyword>
<keyword id="KW-0139">CF(1)</keyword>
<keyword id="KW-0375">Hydrogen ion transport</keyword>
<keyword id="KW-0406">Ion transport</keyword>
<keyword id="KW-0472">Membrane</keyword>
<keyword id="KW-0547">Nucleotide-binding</keyword>
<keyword id="KW-1278">Translocase</keyword>
<keyword id="KW-0813">Transport</keyword>
<organism>
    <name type="scientific">Geobacillus thermoleovorans</name>
    <name type="common">Bacillus thermoleovorans</name>
    <dbReference type="NCBI Taxonomy" id="33941"/>
    <lineage>
        <taxon>Bacteria</taxon>
        <taxon>Bacillati</taxon>
        <taxon>Bacillota</taxon>
        <taxon>Bacilli</taxon>
        <taxon>Bacillales</taxon>
        <taxon>Anoxybacillaceae</taxon>
        <taxon>Geobacillus</taxon>
        <taxon>Geobacillus thermoleovorans group</taxon>
    </lineage>
</organism>
<evidence type="ECO:0000255" key="1">
    <source>
        <dbReference type="HAMAP-Rule" id="MF_01347"/>
    </source>
</evidence>
<gene>
    <name evidence="1" type="primary">atpD</name>
</gene>
<sequence length="473" mass="51924">MTRGRVIQVMGPVVDVKFENGHLPAIYNALKIQHKARNENEVDIDLTLEVALHLGDDTVRTIAMASTDGLIRGMEVIDTGAPISVPVGEVTLGRVFNVLGEPIDLEGDIPADARRDPIHRPAPKFEELATEVEILETGIKVVDLLAPYIKGGKIGLFGGAGVGKTVLIQELIHNIAQEHGGISVFAGVGERTREGNDLYHEMKDSGVISKTAMVFGQMNEPPGARMRVALTGLTMAEYFRDEQGQDVLLFIDNIFRFTQAGSEVSALLGRMPSAVGYQPTLATEMGQLQERITSTAKGSITSIQAIYVPADDYTDPAPATTFSHLDATTNLERKLAEMGIYPAVDPLASTSRALAPEIVGEEHYQVARKVQQTLQRYKELQDIIAILGMDELSDEDKLVVHRARRIQFFLSQNFHVAEQFTGQPGSYVPVKETVRGFKEILEGKYDHLPEDRFRLVGRIEDVVEKAKAMGVEV</sequence>
<protein>
    <recommendedName>
        <fullName evidence="1">ATP synthase subunit beta</fullName>
        <ecNumber evidence="1">7.1.2.2</ecNumber>
    </recommendedName>
    <alternativeName>
        <fullName evidence="1">ATP synthase F1 sector subunit beta</fullName>
    </alternativeName>
    <alternativeName>
        <fullName evidence="1">F-ATPase subunit beta</fullName>
    </alternativeName>
</protein>
<accession>Q9LA80</accession>
<feature type="chain" id="PRO_0000144442" description="ATP synthase subunit beta">
    <location>
        <begin position="1"/>
        <end position="473"/>
    </location>
</feature>
<feature type="binding site" evidence="1">
    <location>
        <begin position="158"/>
        <end position="165"/>
    </location>
    <ligand>
        <name>ATP</name>
        <dbReference type="ChEBI" id="CHEBI:30616"/>
    </ligand>
</feature>
<dbReference type="EC" id="7.1.2.2" evidence="1"/>
<dbReference type="EMBL" id="AF147781">
    <property type="protein sequence ID" value="AAF64075.1"/>
    <property type="molecule type" value="Genomic_DNA"/>
</dbReference>
<dbReference type="SMR" id="Q9LA80"/>
<dbReference type="GO" id="GO:0005886">
    <property type="term" value="C:plasma membrane"/>
    <property type="evidence" value="ECO:0007669"/>
    <property type="project" value="UniProtKB-SubCell"/>
</dbReference>
<dbReference type="GO" id="GO:0045259">
    <property type="term" value="C:proton-transporting ATP synthase complex"/>
    <property type="evidence" value="ECO:0007669"/>
    <property type="project" value="UniProtKB-KW"/>
</dbReference>
<dbReference type="GO" id="GO:0005524">
    <property type="term" value="F:ATP binding"/>
    <property type="evidence" value="ECO:0007669"/>
    <property type="project" value="UniProtKB-UniRule"/>
</dbReference>
<dbReference type="GO" id="GO:0016887">
    <property type="term" value="F:ATP hydrolysis activity"/>
    <property type="evidence" value="ECO:0007669"/>
    <property type="project" value="InterPro"/>
</dbReference>
<dbReference type="GO" id="GO:0046933">
    <property type="term" value="F:proton-transporting ATP synthase activity, rotational mechanism"/>
    <property type="evidence" value="ECO:0007669"/>
    <property type="project" value="UniProtKB-UniRule"/>
</dbReference>
<dbReference type="CDD" id="cd18110">
    <property type="entry name" value="ATP-synt_F1_beta_C"/>
    <property type="match status" value="1"/>
</dbReference>
<dbReference type="CDD" id="cd18115">
    <property type="entry name" value="ATP-synt_F1_beta_N"/>
    <property type="match status" value="1"/>
</dbReference>
<dbReference type="CDD" id="cd01133">
    <property type="entry name" value="F1-ATPase_beta_CD"/>
    <property type="match status" value="1"/>
</dbReference>
<dbReference type="FunFam" id="1.10.1140.10:FF:000001">
    <property type="entry name" value="ATP synthase subunit beta"/>
    <property type="match status" value="1"/>
</dbReference>
<dbReference type="FunFam" id="2.40.10.170:FF:000005">
    <property type="entry name" value="ATP synthase subunit beta"/>
    <property type="match status" value="1"/>
</dbReference>
<dbReference type="FunFam" id="3.40.50.300:FF:000004">
    <property type="entry name" value="ATP synthase subunit beta"/>
    <property type="match status" value="1"/>
</dbReference>
<dbReference type="Gene3D" id="2.40.10.170">
    <property type="match status" value="1"/>
</dbReference>
<dbReference type="Gene3D" id="1.10.1140.10">
    <property type="entry name" value="Bovine Mitochondrial F1-atpase, Atp Synthase Beta Chain, Chain D, domain 3"/>
    <property type="match status" value="1"/>
</dbReference>
<dbReference type="Gene3D" id="3.40.50.300">
    <property type="entry name" value="P-loop containing nucleotide triphosphate hydrolases"/>
    <property type="match status" value="1"/>
</dbReference>
<dbReference type="HAMAP" id="MF_01347">
    <property type="entry name" value="ATP_synth_beta_bact"/>
    <property type="match status" value="1"/>
</dbReference>
<dbReference type="InterPro" id="IPR003593">
    <property type="entry name" value="AAA+_ATPase"/>
</dbReference>
<dbReference type="InterPro" id="IPR055190">
    <property type="entry name" value="ATP-synt_VA_C"/>
</dbReference>
<dbReference type="InterPro" id="IPR005722">
    <property type="entry name" value="ATP_synth_F1_bsu"/>
</dbReference>
<dbReference type="InterPro" id="IPR020003">
    <property type="entry name" value="ATPase_a/bsu_AS"/>
</dbReference>
<dbReference type="InterPro" id="IPR050053">
    <property type="entry name" value="ATPase_alpha/beta_chains"/>
</dbReference>
<dbReference type="InterPro" id="IPR004100">
    <property type="entry name" value="ATPase_F1/V1/A1_a/bsu_N"/>
</dbReference>
<dbReference type="InterPro" id="IPR036121">
    <property type="entry name" value="ATPase_F1/V1/A1_a/bsu_N_sf"/>
</dbReference>
<dbReference type="InterPro" id="IPR000194">
    <property type="entry name" value="ATPase_F1/V1/A1_a/bsu_nucl-bd"/>
</dbReference>
<dbReference type="InterPro" id="IPR024034">
    <property type="entry name" value="ATPase_F1/V1_b/a_C"/>
</dbReference>
<dbReference type="InterPro" id="IPR027417">
    <property type="entry name" value="P-loop_NTPase"/>
</dbReference>
<dbReference type="NCBIfam" id="TIGR01039">
    <property type="entry name" value="atpD"/>
    <property type="match status" value="1"/>
</dbReference>
<dbReference type="PANTHER" id="PTHR15184">
    <property type="entry name" value="ATP SYNTHASE"/>
    <property type="match status" value="1"/>
</dbReference>
<dbReference type="PANTHER" id="PTHR15184:SF71">
    <property type="entry name" value="ATP SYNTHASE SUBUNIT BETA, MITOCHONDRIAL"/>
    <property type="match status" value="1"/>
</dbReference>
<dbReference type="Pfam" id="PF00006">
    <property type="entry name" value="ATP-synt_ab"/>
    <property type="match status" value="1"/>
</dbReference>
<dbReference type="Pfam" id="PF02874">
    <property type="entry name" value="ATP-synt_ab_N"/>
    <property type="match status" value="1"/>
</dbReference>
<dbReference type="Pfam" id="PF22919">
    <property type="entry name" value="ATP-synt_VA_C"/>
    <property type="match status" value="1"/>
</dbReference>
<dbReference type="SMART" id="SM00382">
    <property type="entry name" value="AAA"/>
    <property type="match status" value="1"/>
</dbReference>
<dbReference type="SUPFAM" id="SSF47917">
    <property type="entry name" value="C-terminal domain of alpha and beta subunits of F1 ATP synthase"/>
    <property type="match status" value="1"/>
</dbReference>
<dbReference type="SUPFAM" id="SSF50615">
    <property type="entry name" value="N-terminal domain of alpha and beta subunits of F1 ATP synthase"/>
    <property type="match status" value="1"/>
</dbReference>
<dbReference type="SUPFAM" id="SSF52540">
    <property type="entry name" value="P-loop containing nucleoside triphosphate hydrolases"/>
    <property type="match status" value="1"/>
</dbReference>
<dbReference type="PROSITE" id="PS00152">
    <property type="entry name" value="ATPASE_ALPHA_BETA"/>
    <property type="match status" value="1"/>
</dbReference>